<keyword id="KW-0072">Autophagy</keyword>
<keyword id="KW-0963">Cytoplasm</keyword>
<keyword id="KW-0653">Protein transport</keyword>
<keyword id="KW-1185">Reference proteome</keyword>
<keyword id="KW-0813">Transport</keyword>
<keyword id="KW-0833">Ubl conjugation pathway</keyword>
<reference key="1">
    <citation type="journal article" date="2003" name="Nature">
        <title>The genome sequence of the filamentous fungus Neurospora crassa.</title>
        <authorList>
            <person name="Galagan J.E."/>
            <person name="Calvo S.E."/>
            <person name="Borkovich K.A."/>
            <person name="Selker E.U."/>
            <person name="Read N.D."/>
            <person name="Jaffe D.B."/>
            <person name="FitzHugh W."/>
            <person name="Ma L.-J."/>
            <person name="Smirnov S."/>
            <person name="Purcell S."/>
            <person name="Rehman B."/>
            <person name="Elkins T."/>
            <person name="Engels R."/>
            <person name="Wang S."/>
            <person name="Nielsen C.B."/>
            <person name="Butler J."/>
            <person name="Endrizzi M."/>
            <person name="Qui D."/>
            <person name="Ianakiev P."/>
            <person name="Bell-Pedersen D."/>
            <person name="Nelson M.A."/>
            <person name="Werner-Washburne M."/>
            <person name="Selitrennikoff C.P."/>
            <person name="Kinsey J.A."/>
            <person name="Braun E.L."/>
            <person name="Zelter A."/>
            <person name="Schulte U."/>
            <person name="Kothe G.O."/>
            <person name="Jedd G."/>
            <person name="Mewes H.-W."/>
            <person name="Staben C."/>
            <person name="Marcotte E."/>
            <person name="Greenberg D."/>
            <person name="Roy A."/>
            <person name="Foley K."/>
            <person name="Naylor J."/>
            <person name="Stange-Thomann N."/>
            <person name="Barrett R."/>
            <person name="Gnerre S."/>
            <person name="Kamal M."/>
            <person name="Kamvysselis M."/>
            <person name="Mauceli E.W."/>
            <person name="Bielke C."/>
            <person name="Rudd S."/>
            <person name="Frishman D."/>
            <person name="Krystofova S."/>
            <person name="Rasmussen C."/>
            <person name="Metzenberg R.L."/>
            <person name="Perkins D.D."/>
            <person name="Kroken S."/>
            <person name="Cogoni C."/>
            <person name="Macino G."/>
            <person name="Catcheside D.E.A."/>
            <person name="Li W."/>
            <person name="Pratt R.J."/>
            <person name="Osmani S.A."/>
            <person name="DeSouza C.P.C."/>
            <person name="Glass N.L."/>
            <person name="Orbach M.J."/>
            <person name="Berglund J.A."/>
            <person name="Voelker R."/>
            <person name="Yarden O."/>
            <person name="Plamann M."/>
            <person name="Seiler S."/>
            <person name="Dunlap J.C."/>
            <person name="Radford A."/>
            <person name="Aramayo R."/>
            <person name="Natvig D.O."/>
            <person name="Alex L.A."/>
            <person name="Mannhaupt G."/>
            <person name="Ebbole D.J."/>
            <person name="Freitag M."/>
            <person name="Paulsen I."/>
            <person name="Sachs M.S."/>
            <person name="Lander E.S."/>
            <person name="Nusbaum C."/>
            <person name="Birren B.W."/>
        </authorList>
    </citation>
    <scope>NUCLEOTIDE SEQUENCE [LARGE SCALE GENOMIC DNA]</scope>
    <source>
        <strain>ATCC 24698 / 74-OR23-1A / CBS 708.71 / DSM 1257 / FGSC 987</strain>
    </source>
</reference>
<accession>Q7SDY2</accession>
<protein>
    <recommendedName>
        <fullName>Autophagy-related protein 3</fullName>
    </recommendedName>
    <alternativeName>
        <fullName>Autophagy-related E2-like conjugation enzyme atg3</fullName>
    </alternativeName>
</protein>
<feature type="chain" id="PRO_0000213583" description="Autophagy-related protein 3">
    <location>
        <begin position="1"/>
        <end position="346"/>
    </location>
</feature>
<feature type="region of interest" description="Flexible region" evidence="1">
    <location>
        <begin position="85"/>
        <end position="161"/>
    </location>
</feature>
<feature type="region of interest" description="Handle region" evidence="1">
    <location>
        <begin position="242"/>
        <end position="322"/>
    </location>
</feature>
<feature type="active site" description="Glycyl thioester intermediate" evidence="1">
    <location>
        <position position="238"/>
    </location>
</feature>
<sequence>MNFLRSTAATLLDKYTPVSHTSTFRNTGQITPEEFVAAGDYLTFKFPSWSWADADSPSKRLPFLPPGKQFLVTRHVPCHRRLNDDFAGDAGHEEALVEGNKGGADDDGWLRTGSMTSSQPLRVREVRTVDDAGNVGDREVVDEDDIPDMEDDDDDEAIIRAEGDNSNSGKRTYTLYITYANAYKCPRMYMSGYLSNGQPLPPHLMMEDIVGDYKDKTVTLEDFPFFSHSVKMASVHPCRHASVMKTLLDRADAALKLRREKMKAGQGSGSEQGMEGLVDEINKLDVSGAHANAVEAAPGEDAEWEEVPHDVADQEVAIRVDQYLVVFLKFIASVTPGIEHDFTMGV</sequence>
<name>ATG3_NEUCR</name>
<gene>
    <name type="primary">apg-3</name>
    <name type="synonym">atg3</name>
    <name type="ORF">NCU01955</name>
</gene>
<organism>
    <name type="scientific">Neurospora crassa (strain ATCC 24698 / 74-OR23-1A / CBS 708.71 / DSM 1257 / FGSC 987)</name>
    <dbReference type="NCBI Taxonomy" id="367110"/>
    <lineage>
        <taxon>Eukaryota</taxon>
        <taxon>Fungi</taxon>
        <taxon>Dikarya</taxon>
        <taxon>Ascomycota</taxon>
        <taxon>Pezizomycotina</taxon>
        <taxon>Sordariomycetes</taxon>
        <taxon>Sordariomycetidae</taxon>
        <taxon>Sordariales</taxon>
        <taxon>Sordariaceae</taxon>
        <taxon>Neurospora</taxon>
    </lineage>
</organism>
<proteinExistence type="inferred from homology"/>
<dbReference type="EMBL" id="CM002236">
    <property type="protein sequence ID" value="EAA35003.2"/>
    <property type="molecule type" value="Genomic_DNA"/>
</dbReference>
<dbReference type="RefSeq" id="XP_964239.2">
    <property type="nucleotide sequence ID" value="XM_959146.2"/>
</dbReference>
<dbReference type="SMR" id="Q7SDY2"/>
<dbReference type="FunCoup" id="Q7SDY2">
    <property type="interactions" value="1052"/>
</dbReference>
<dbReference type="STRING" id="367110.Q7SDY2"/>
<dbReference type="PaxDb" id="5141-EFNCRP00000001030"/>
<dbReference type="EnsemblFungi" id="EAA35003">
    <property type="protein sequence ID" value="EAA35003"/>
    <property type="gene ID" value="NCU01955"/>
</dbReference>
<dbReference type="GeneID" id="3880388"/>
<dbReference type="KEGG" id="ncr:NCU01955"/>
<dbReference type="VEuPathDB" id="FungiDB:NCU01955"/>
<dbReference type="HOGENOM" id="CLU_027518_2_0_1"/>
<dbReference type="InParanoid" id="Q7SDY2"/>
<dbReference type="OrthoDB" id="1584384at2759"/>
<dbReference type="Proteomes" id="UP000001805">
    <property type="component" value="Chromosome 1, Linkage Group I"/>
</dbReference>
<dbReference type="GO" id="GO:0005829">
    <property type="term" value="C:cytosol"/>
    <property type="evidence" value="ECO:0000318"/>
    <property type="project" value="GO_Central"/>
</dbReference>
<dbReference type="GO" id="GO:0005739">
    <property type="term" value="C:mitochondrion"/>
    <property type="evidence" value="ECO:0007669"/>
    <property type="project" value="EnsemblFungi"/>
</dbReference>
<dbReference type="GO" id="GO:0061908">
    <property type="term" value="C:phagophore"/>
    <property type="evidence" value="ECO:0007669"/>
    <property type="project" value="EnsemblFungi"/>
</dbReference>
<dbReference type="GO" id="GO:0000407">
    <property type="term" value="C:phagophore assembly site"/>
    <property type="evidence" value="ECO:0000318"/>
    <property type="project" value="GO_Central"/>
</dbReference>
<dbReference type="GO" id="GO:0141046">
    <property type="term" value="F:Atg8-family conjugating enzyme activity"/>
    <property type="evidence" value="ECO:0000318"/>
    <property type="project" value="GO_Central"/>
</dbReference>
<dbReference type="GO" id="GO:0019776">
    <property type="term" value="F:Atg8-family ligase activity"/>
    <property type="evidence" value="ECO:0007669"/>
    <property type="project" value="EnsemblFungi"/>
</dbReference>
<dbReference type="GO" id="GO:0000045">
    <property type="term" value="P:autophagosome assembly"/>
    <property type="evidence" value="ECO:0000318"/>
    <property type="project" value="GO_Central"/>
</dbReference>
<dbReference type="GO" id="GO:0000422">
    <property type="term" value="P:autophagy of mitochondrion"/>
    <property type="evidence" value="ECO:0000318"/>
    <property type="project" value="GO_Central"/>
</dbReference>
<dbReference type="GO" id="GO:0061723">
    <property type="term" value="P:glycophagy"/>
    <property type="evidence" value="ECO:0000318"/>
    <property type="project" value="GO_Central"/>
</dbReference>
<dbReference type="GO" id="GO:0044804">
    <property type="term" value="P:nucleophagy"/>
    <property type="evidence" value="ECO:0000318"/>
    <property type="project" value="GO_Central"/>
</dbReference>
<dbReference type="GO" id="GO:0034727">
    <property type="term" value="P:piecemeal microautophagy of the nucleus"/>
    <property type="evidence" value="ECO:0007669"/>
    <property type="project" value="EnsemblFungi"/>
</dbReference>
<dbReference type="GO" id="GO:0006612">
    <property type="term" value="P:protein targeting to membrane"/>
    <property type="evidence" value="ECO:0007669"/>
    <property type="project" value="EnsemblFungi"/>
</dbReference>
<dbReference type="GO" id="GO:0015031">
    <property type="term" value="P:protein transport"/>
    <property type="evidence" value="ECO:0007669"/>
    <property type="project" value="UniProtKB-KW"/>
</dbReference>
<dbReference type="InterPro" id="IPR007135">
    <property type="entry name" value="Atg3/Atg10"/>
</dbReference>
<dbReference type="PANTHER" id="PTHR12866">
    <property type="entry name" value="UBIQUITIN-LIKE-CONJUGATING ENZYME ATG3"/>
    <property type="match status" value="1"/>
</dbReference>
<dbReference type="PANTHER" id="PTHR12866:SF2">
    <property type="entry name" value="UBIQUITIN-LIKE-CONJUGATING ENZYME ATG3"/>
    <property type="match status" value="1"/>
</dbReference>
<dbReference type="Pfam" id="PF03987">
    <property type="entry name" value="Autophagy_act_C"/>
    <property type="match status" value="1"/>
</dbReference>
<evidence type="ECO:0000250" key="1"/>
<evidence type="ECO:0000305" key="2"/>
<comment type="function">
    <text evidence="1">E2 conjugating enzyme required for the cytoplasm to vacuole transport (Cvt) and autophagy. Required for selective autophagic degradation of the nucleus (nucleophagy) as well as for mitophagy which contributes to regulate mitochondrial quantity and quality by eliminating the mitochondria to a basal level to fulfill cellular energy requirements and preventing excess ROS production. Responsible for the E2-like covalent binding of phosphatidylethanolamine to the C-terminal Gly of apg-6/atg8. The atg12-apg-4/atg5 conjugate plays a role of an E3 and promotes the transfer of apg-6/atg8 from apg-3/atg3 to phosphatidylethanolamine (PE). This step is required for the membrane association of apg-6/atg8. The formation of the apg-6/atg8-phosphatidylethanolamine conjugate is essential for autophagy and for the cytoplasm to vacuole transport (Cvt). The apg-6/atg8-PE conjugate mediates tethering between adjacent membranes and stimulates membrane hemifusion, leading to expansion of the autophagosomal membrane during autophagy (By similarity).</text>
</comment>
<comment type="subunit">
    <text evidence="1">Monomer. Interacts with apg-6/atg8 through an intermediate thioester bond through the C-terminal Gly of apg-6/atg8. Also interacts with the 40 amino acid C-terminal region of the E1-like apg-5/atg7 enzyme. Also interacts with the atg12-apg-4/atg5 conjugate.</text>
</comment>
<comment type="subcellular location">
    <subcellularLocation>
        <location evidence="1">Cytoplasm</location>
    </subcellularLocation>
</comment>
<comment type="domain">
    <text evidence="1">The N-terminal region is involved in phosphatidylethanolamine-binding and is required for apg-6/atg8-PE conjugation.</text>
</comment>
<comment type="domain">
    <text evidence="1">The flexible region (FR) is required for apg-5/atg7-binding.</text>
</comment>
<comment type="domain">
    <text evidence="1">The handle region (HR) contains the apg-6/atg8 interaction motif (AIM) and mediates binding to apg-6/atg8. It is crucial for the cytoplasm-to-vacuole targeting pathway (By similarity).</text>
</comment>
<comment type="similarity">
    <text evidence="2">Belongs to the ATG3 family.</text>
</comment>